<organism>
    <name type="scientific">Arabidopsis thaliana</name>
    <name type="common">Mouse-ear cress</name>
    <dbReference type="NCBI Taxonomy" id="3702"/>
    <lineage>
        <taxon>Eukaryota</taxon>
        <taxon>Viridiplantae</taxon>
        <taxon>Streptophyta</taxon>
        <taxon>Embryophyta</taxon>
        <taxon>Tracheophyta</taxon>
        <taxon>Spermatophyta</taxon>
        <taxon>Magnoliopsida</taxon>
        <taxon>eudicotyledons</taxon>
        <taxon>Gunneridae</taxon>
        <taxon>Pentapetalae</taxon>
        <taxon>rosids</taxon>
        <taxon>malvids</taxon>
        <taxon>Brassicales</taxon>
        <taxon>Brassicaceae</taxon>
        <taxon>Camelineae</taxon>
        <taxon>Arabidopsis</taxon>
    </lineage>
</organism>
<comment type="function">
    <text evidence="2">ATP-independent protease that degrades both mitochondrial and chloroplastic transit peptides after their cleavage. Also degrades other unstructured peptides. Specific for peptides in the range of 10 to 65 residues. Shows a preference for cleavage after small polar residues and before basic residues, with a bias for positively charged amino acid residues.</text>
</comment>
<comment type="cofactor">
    <cofactor evidence="5">
        <name>Zn(2+)</name>
        <dbReference type="ChEBI" id="CHEBI:29105"/>
    </cofactor>
    <text evidence="5">Binds 1 zinc ion per subunit.</text>
</comment>
<comment type="cofactor">
    <cofactor evidence="5">
        <name>Mg(2+)</name>
        <dbReference type="ChEBI" id="CHEBI:18420"/>
    </cofactor>
    <text evidence="5">Binds 2 cations, such as magnesium or calcium, per subunit.</text>
</comment>
<comment type="activity regulation">
    <text evidence="3 5">Inactive in the absence of MgCl(2) and CaCl(2) and full activation at 10 mM concentrations of either ion (PubMed:16601675). Completely inhibited by the metal chelator orthophenanthroline, but not affected by phenylmethylsulfonyl fluoride (PMSF) or N-ethylmaleimide (NEM) (PubMed:14617063, PubMed:16601675).</text>
</comment>
<comment type="biophysicochemical properties">
    <phDependence>
        <text evidence="3">Active from pH 4 to 10.</text>
    </phDependence>
    <temperatureDependence>
        <text evidence="3">Optimum temperature is 28 degrees Celsius. Active from 4 to 40 degrees Celsius.</text>
    </temperatureDependence>
</comment>
<comment type="subunit">
    <text evidence="3">Homodimer.</text>
</comment>
<comment type="interaction">
    <interactant intactId="EBI-7143359">
        <id>Q9LJL3</id>
    </interactant>
    <interactant intactId="EBI-7143406">
        <id>P17614</id>
        <label>ATPB</label>
    </interactant>
    <organismsDiffer>true</organismsDiffer>
    <experiments>6</experiments>
</comment>
<comment type="subcellular location">
    <subcellularLocation>
        <location evidence="3">Plastid</location>
        <location evidence="3">Chloroplast stroma</location>
    </subcellularLocation>
    <subcellularLocation>
        <location evidence="3 6">Mitochondrion matrix</location>
    </subcellularLocation>
</comment>
<comment type="alternative products">
    <event type="alternative splicing"/>
    <isoform>
        <id>Q9LJL3-1</id>
        <name>1</name>
        <sequence type="displayed"/>
    </isoform>
    <text>A number of isoforms are produced. According to EST sequences.</text>
</comment>
<comment type="tissue specificity">
    <text evidence="4">Expressed only in siliques and flowers.</text>
</comment>
<comment type="miscellaneous">
    <text evidence="5">The 2 enzymes halves enclose a large proteolytic chamber spacious enough to hold peptide substrates, but sufficiently small to exclude larger, folded proteins. Since the active site includes residues from both the N- and C-terminal part of the protein, proteolysis can occur only when the chamber is closed. Covalently locking the 2 halves of the protease with disulfide bonds induces a loss of activity.</text>
</comment>
<comment type="similarity">
    <text evidence="7">Belongs to the peptidase M16 family. PreP subfamily.</text>
</comment>
<comment type="sequence caution" evidence="7">
    <conflict type="erroneous initiation">
        <sequence resource="EMBL-CDS" id="BAB02957"/>
    </conflict>
</comment>
<keyword id="KW-0002">3D-structure</keyword>
<keyword id="KW-0007">Acetylation</keyword>
<keyword id="KW-0025">Alternative splicing</keyword>
<keyword id="KW-0150">Chloroplast</keyword>
<keyword id="KW-0175">Coiled coil</keyword>
<keyword id="KW-0378">Hydrolase</keyword>
<keyword id="KW-0460">Magnesium</keyword>
<keyword id="KW-0479">Metal-binding</keyword>
<keyword id="KW-0482">Metalloprotease</keyword>
<keyword id="KW-0496">Mitochondrion</keyword>
<keyword id="KW-0934">Plastid</keyword>
<keyword id="KW-0645">Protease</keyword>
<keyword id="KW-1185">Reference proteome</keyword>
<keyword id="KW-0809">Transit peptide</keyword>
<keyword id="KW-0862">Zinc</keyword>
<gene>
    <name type="primary">PREP1</name>
    <name type="synonym">ZNMP1</name>
    <name type="ordered locus">At3g19170</name>
    <name type="ORF">MVI11.6</name>
    <name type="ORF">MVI11.7</name>
    <name type="ORF">MVI11_8</name>
</gene>
<proteinExistence type="evidence at protein level"/>
<reference key="1">
    <citation type="journal article" date="2000" name="DNA Res.">
        <title>Structural analysis of Arabidopsis thaliana chromosome 3. II. Sequence features of the 4,251,695 bp regions covered by 90 P1, TAC and BAC clones.</title>
        <authorList>
            <person name="Kaneko T."/>
            <person name="Katoh T."/>
            <person name="Sato S."/>
            <person name="Nakamura Y."/>
            <person name="Asamizu E."/>
            <person name="Tabata S."/>
        </authorList>
    </citation>
    <scope>NUCLEOTIDE SEQUENCE [LARGE SCALE GENOMIC DNA]</scope>
    <source>
        <strain>cv. Columbia</strain>
    </source>
</reference>
<reference key="2">
    <citation type="journal article" date="2017" name="Plant J.">
        <title>Araport11: a complete reannotation of the Arabidopsis thaliana reference genome.</title>
        <authorList>
            <person name="Cheng C.Y."/>
            <person name="Krishnakumar V."/>
            <person name="Chan A.P."/>
            <person name="Thibaud-Nissen F."/>
            <person name="Schobel S."/>
            <person name="Town C.D."/>
        </authorList>
    </citation>
    <scope>GENOME REANNOTATION</scope>
    <source>
        <strain>cv. Columbia</strain>
    </source>
</reference>
<reference key="3">
    <citation type="journal article" date="2003" name="Science">
        <title>Empirical analysis of transcriptional activity in the Arabidopsis genome.</title>
        <authorList>
            <person name="Yamada K."/>
            <person name="Lim J."/>
            <person name="Dale J.M."/>
            <person name="Chen H."/>
            <person name="Shinn P."/>
            <person name="Palm C.J."/>
            <person name="Southwick A.M."/>
            <person name="Wu H.C."/>
            <person name="Kim C.J."/>
            <person name="Nguyen M."/>
            <person name="Pham P.K."/>
            <person name="Cheuk R.F."/>
            <person name="Karlin-Newmann G."/>
            <person name="Liu S.X."/>
            <person name="Lam B."/>
            <person name="Sakano H."/>
            <person name="Wu T."/>
            <person name="Yu G."/>
            <person name="Miranda M."/>
            <person name="Quach H.L."/>
            <person name="Tripp M."/>
            <person name="Chang C.H."/>
            <person name="Lee J.M."/>
            <person name="Toriumi M.J."/>
            <person name="Chan M.M."/>
            <person name="Tang C.C."/>
            <person name="Onodera C.S."/>
            <person name="Deng J.M."/>
            <person name="Akiyama K."/>
            <person name="Ansari Y."/>
            <person name="Arakawa T."/>
            <person name="Banh J."/>
            <person name="Banno F."/>
            <person name="Bowser L."/>
            <person name="Brooks S.Y."/>
            <person name="Carninci P."/>
            <person name="Chao Q."/>
            <person name="Choy N."/>
            <person name="Enju A."/>
            <person name="Goldsmith A.D."/>
            <person name="Gurjal M."/>
            <person name="Hansen N.F."/>
            <person name="Hayashizaki Y."/>
            <person name="Johnson-Hopson C."/>
            <person name="Hsuan V.W."/>
            <person name="Iida K."/>
            <person name="Karnes M."/>
            <person name="Khan S."/>
            <person name="Koesema E."/>
            <person name="Ishida J."/>
            <person name="Jiang P.X."/>
            <person name="Jones T."/>
            <person name="Kawai J."/>
            <person name="Kamiya A."/>
            <person name="Meyers C."/>
            <person name="Nakajima M."/>
            <person name="Narusaka M."/>
            <person name="Seki M."/>
            <person name="Sakurai T."/>
            <person name="Satou M."/>
            <person name="Tamse R."/>
            <person name="Vaysberg M."/>
            <person name="Wallender E.K."/>
            <person name="Wong C."/>
            <person name="Yamamura Y."/>
            <person name="Yuan S."/>
            <person name="Shinozaki K."/>
            <person name="Davis R.W."/>
            <person name="Theologis A."/>
            <person name="Ecker J.R."/>
        </authorList>
    </citation>
    <scope>NUCLEOTIDE SEQUENCE [LARGE SCALE MRNA]</scope>
    <source>
        <strain>cv. Columbia</strain>
    </source>
</reference>
<reference key="4">
    <citation type="journal article" date="2002" name="J. Biol. Chem.">
        <title>Isolation and identification of a novel mitochondrial metalloprotease (PreP) that degrades targeting presequences in plants.</title>
        <authorList>
            <person name="Staahl A."/>
            <person name="Moberg P."/>
            <person name="Ytterberg J."/>
            <person name="Panfilov O."/>
            <person name="Brockenhuus Von Lowenhielm H."/>
            <person name="Nilsson F."/>
            <person name="Glaser E."/>
        </authorList>
    </citation>
    <scope>IDENTIFICATION BY MASS SPECTROMETRY</scope>
    <scope>FUNCTION</scope>
</reference>
<reference key="5">
    <citation type="journal article" date="2003" name="Plant J.">
        <title>Characterization of a novel zinc metalloprotease involved in degrading targeting peptides in mitochondria and chloroplasts.</title>
        <authorList>
            <person name="Moberg P."/>
            <person name="Staahl A."/>
            <person name="Bhushan S."/>
            <person name="Wright S.J."/>
            <person name="Eriksson A."/>
            <person name="Bruce B.D."/>
            <person name="Glaser E."/>
        </authorList>
    </citation>
    <scope>CHARACTERIZATION</scope>
    <scope>BIOPHYSICOCHEMICAL PROPERTIES</scope>
    <scope>SUBUNIT</scope>
    <scope>SUBCELLULAR LOCATION</scope>
    <scope>ACTIVE SITE</scope>
    <scope>MUTAGENESIS OF HIS-162; GLU-165; HIS-166; GLU-240 AND GLU-245</scope>
</reference>
<reference key="6">
    <citation type="journal article" date="2005" name="Plant Cell Physiol.">
        <title>Catalysis, subcellular localization, expression and evolution of the targeting peptides degrading protease, AtPreP2.</title>
        <authorList>
            <person name="Bhushan S."/>
            <person name="Staahl A."/>
            <person name="Nilsson S."/>
            <person name="Lefebvre B."/>
            <person name="Seki M."/>
            <person name="Roth C."/>
            <person name="McWilliam D."/>
            <person name="Wright S.J."/>
            <person name="Liberles D.A."/>
            <person name="Shinozaki K."/>
            <person name="Bruce B.D."/>
            <person name="Boutry M."/>
            <person name="Glaser E."/>
        </authorList>
    </citation>
    <scope>CHARACTERIZATION</scope>
    <scope>ACTIVITY REGULATION</scope>
    <scope>IDENTIFICATION BY MASS SPECTROMETRY</scope>
    <scope>TISSUE SPECIFICITY</scope>
</reference>
<reference key="7">
    <citation type="journal article" date="2005" name="J. Mol. Biol.">
        <title>Two novel targeting peptide degrading proteases, PrePs, in mitochondria and chloroplasts, so similar and still different.</title>
        <authorList>
            <person name="Staahl A."/>
            <person name="Nilsson S."/>
            <person name="Lundberg P."/>
            <person name="Bhushan S."/>
            <person name="Biverstaahl H."/>
            <person name="Moberg P."/>
            <person name="Morisset M."/>
            <person name="Vener A."/>
            <person name="Maeler L."/>
            <person name="Langel U."/>
            <person name="Glaser E."/>
        </authorList>
    </citation>
    <scope>CLEAVAGE SPECIFICITY</scope>
</reference>
<reference key="8">
    <citation type="journal article" date="2011" name="J. Mol. Biol.">
        <title>Targeting capacity and conservation of PreP homologues localization in mitochondria of different species.</title>
        <authorList>
            <person name="Alikhani N."/>
            <person name="Berglund A.K."/>
            <person name="Engmann T."/>
            <person name="Spaanning E."/>
            <person name="Voegtle F.N."/>
            <person name="Pavlov P."/>
            <person name="Meisinger C."/>
            <person name="Langer T."/>
            <person name="Glaser E."/>
        </authorList>
    </citation>
    <scope>SUBCELLULAR LOCATION</scope>
</reference>
<reference key="9">
    <citation type="journal article" date="2012" name="Mol. Cell. Proteomics">
        <title>Comparative large-scale characterisation of plant vs. mammal proteins reveals similar and idiosyncratic N-alpha acetylation features.</title>
        <authorList>
            <person name="Bienvenut W.V."/>
            <person name="Sumpton D."/>
            <person name="Martinez A."/>
            <person name="Lilla S."/>
            <person name="Espagne C."/>
            <person name="Meinnel T."/>
            <person name="Giglione C."/>
        </authorList>
    </citation>
    <scope>ACETYLATION [LARGE SCALE ANALYSIS] AT VAL-86</scope>
    <scope>CLEAVAGE OF TRANSIT PEPTIDE [LARGE SCALE ANALYSIS] AFTER ALA-85</scope>
    <scope>IDENTIFICATION BY MASS SPECTROMETRY [LARGE SCALE ANALYSIS]</scope>
</reference>
<reference key="10">
    <citation type="journal article" date="2006" name="EMBO J.">
        <title>The closed structure of presequence protease PreP forms a unique 10,000 Angstroms3 chamber for proteolysis.</title>
        <authorList>
            <person name="Johnson K.A."/>
            <person name="Bhushan S."/>
            <person name="Staahl A."/>
            <person name="Hallberg B.M."/>
            <person name="Frohn A."/>
            <person name="Glaser E."/>
            <person name="Eneqvist T."/>
        </authorList>
    </citation>
    <scope>X-RAY CRYSTALLOGRAPHY (2.1 ANGSTROMS) OF 86-1080</scope>
    <scope>COFACTOR</scope>
    <scope>MUTAGENESIS OF GLU-179; ASN-194; LYS-256; GLU-262; LYS-264; ALA-416; GLU-430; ASN-700; SER-767; GLN-895; ARG-933; GLY-937 AND TYR-939</scope>
</reference>
<accession>Q9LJL3</accession>
<accession>Q8RUN6</accession>
<feature type="transit peptide" description="Chloroplast and mitochondrion" evidence="11">
    <location>
        <begin position="1"/>
        <end position="85"/>
    </location>
</feature>
<feature type="chain" id="PRO_0000249938" description="Presequence protease 1, chloroplastic/mitochondrial">
    <location>
        <begin position="86"/>
        <end position="1080"/>
    </location>
</feature>
<feature type="coiled-coil region" evidence="1">
    <location>
        <begin position="571"/>
        <end position="612"/>
    </location>
</feature>
<feature type="active site" description="Proton acceptor" evidence="5">
    <location>
        <position position="165"/>
    </location>
</feature>
<feature type="active site" evidence="8 9 10">
    <location>
        <position position="240"/>
    </location>
</feature>
<feature type="binding site" evidence="5">
    <location>
        <position position="162"/>
    </location>
    <ligand>
        <name>Zn(2+)</name>
        <dbReference type="ChEBI" id="CHEBI:29105"/>
        <note>catalytic</note>
    </ligand>
</feature>
<feature type="binding site" evidence="5">
    <location>
        <position position="166"/>
    </location>
    <ligand>
        <name>Zn(2+)</name>
        <dbReference type="ChEBI" id="CHEBI:29105"/>
        <note>catalytic</note>
    </ligand>
</feature>
<feature type="binding site" evidence="5">
    <location>
        <position position="262"/>
    </location>
    <ligand>
        <name>Zn(2+)</name>
        <dbReference type="ChEBI" id="CHEBI:29105"/>
        <note>catalytic</note>
    </ligand>
</feature>
<feature type="binding site" evidence="5 10">
    <location>
        <position position="705"/>
    </location>
    <ligand>
        <name>Mg(2+)</name>
        <dbReference type="ChEBI" id="CHEBI:18420"/>
    </ligand>
</feature>
<feature type="modified residue" description="N-acetylvaline" evidence="11">
    <location>
        <position position="86"/>
    </location>
</feature>
<feature type="mutagenesis site" description="Loss of activity." evidence="3">
    <original>H</original>
    <variation>L</variation>
    <location>
        <position position="162"/>
    </location>
</feature>
<feature type="mutagenesis site" description="Loss of activity." evidence="3">
    <original>E</original>
    <variation>Q</variation>
    <location>
        <position position="165"/>
    </location>
</feature>
<feature type="mutagenesis site" description="Loss of activity." evidence="3">
    <original>H</original>
    <variation>L</variation>
    <location>
        <position position="166"/>
    </location>
</feature>
<feature type="mutagenesis site" description="Decreased activity toward some substrates." evidence="5">
    <original>E</original>
    <variation>Q</variation>
    <location>
        <position position="179"/>
    </location>
</feature>
<feature type="mutagenesis site" description="Reduced activity." evidence="5">
    <original>N</original>
    <variation>A</variation>
    <location>
        <position position="194"/>
    </location>
</feature>
<feature type="mutagenesis site" description="Decreased activity toward some substrates." evidence="3">
    <original>E</original>
    <variation>Q</variation>
    <location>
        <position position="240"/>
    </location>
</feature>
<feature type="mutagenesis site" description="No loss of activity." evidence="3">
    <original>E</original>
    <variation>Q</variation>
    <location>
        <position position="245"/>
    </location>
</feature>
<feature type="mutagenesis site" description="Inactive under oxidizing conditions and fully active under reducing conditions; when associated with C-937." evidence="5">
    <original>K</original>
    <variation>C</variation>
    <location>
        <position position="256"/>
    </location>
</feature>
<feature type="mutagenesis site" description="Loss of activity." evidence="5">
    <original>E</original>
    <variation>Q</variation>
    <location>
        <position position="262"/>
    </location>
</feature>
<feature type="mutagenesis site" description="Inactive under oxidizing conditions and fully active under reducing conditions; when associated with C-895." evidence="5">
    <original>K</original>
    <variation>C</variation>
    <location>
        <position position="264"/>
    </location>
</feature>
<feature type="mutagenesis site" description="Little or no effect; when associated with C-700." evidence="5">
    <original>A</original>
    <variation>C</variation>
    <location>
        <position position="416"/>
    </location>
</feature>
<feature type="mutagenesis site" description="Inactive under oxidizing conditions and fully active under reducing conditions; when associated with C-767." evidence="5">
    <original>E</original>
    <variation>C</variation>
    <location>
        <position position="430"/>
    </location>
</feature>
<feature type="mutagenesis site" description="Little or no effect; when associated with C-416." evidence="5">
    <original>N</original>
    <variation>C</variation>
    <location>
        <position position="700"/>
    </location>
</feature>
<feature type="mutagenesis site" description="Inactive under oxidizing conditions and fully active under reducing conditions; when associated with C-430." evidence="5">
    <original>S</original>
    <variation>C</variation>
    <location>
        <position position="767"/>
    </location>
</feature>
<feature type="mutagenesis site" description="Inactive under oxidizing conditions and fully active under reducing conditions; when associated with C-264." evidence="5">
    <original>Q</original>
    <variation>C</variation>
    <location>
        <position position="895"/>
    </location>
</feature>
<feature type="mutagenesis site" description="Loss of activity." evidence="5">
    <original>R</original>
    <variation>A</variation>
    <variation>K</variation>
    <location>
        <position position="933"/>
    </location>
</feature>
<feature type="mutagenesis site" description="Inactive under oxidizing conditions and fully active under reducing conditions; when associated with C-256." evidence="5">
    <original>G</original>
    <variation>C</variation>
    <location>
        <position position="937"/>
    </location>
</feature>
<feature type="mutagenesis site" description="Loss of activity." evidence="5">
    <original>Y</original>
    <variation>F</variation>
    <location>
        <position position="939"/>
    </location>
</feature>
<feature type="helix" evidence="12">
    <location>
        <begin position="101"/>
        <end position="104"/>
    </location>
</feature>
<feature type="strand" evidence="12">
    <location>
        <begin position="107"/>
        <end position="115"/>
    </location>
</feature>
<feature type="turn" evidence="12">
    <location>
        <begin position="116"/>
        <end position="119"/>
    </location>
</feature>
<feature type="strand" evidence="12">
    <location>
        <begin position="120"/>
        <end position="127"/>
    </location>
</feature>
<feature type="turn" evidence="12">
    <location>
        <begin position="128"/>
        <end position="130"/>
    </location>
</feature>
<feature type="strand" evidence="12">
    <location>
        <begin position="133"/>
        <end position="138"/>
    </location>
</feature>
<feature type="strand" evidence="12">
    <location>
        <begin position="142"/>
        <end position="151"/>
    </location>
</feature>
<feature type="strand" evidence="12">
    <location>
        <begin position="155"/>
        <end position="158"/>
    </location>
</feature>
<feature type="helix" evidence="12">
    <location>
        <begin position="160"/>
        <end position="167"/>
    </location>
</feature>
<feature type="helix" evidence="12">
    <location>
        <begin position="180"/>
        <end position="187"/>
    </location>
</feature>
<feature type="strand" evidence="12">
    <location>
        <begin position="190"/>
        <end position="193"/>
    </location>
</feature>
<feature type="strand" evidence="12">
    <location>
        <begin position="199"/>
        <end position="210"/>
    </location>
</feature>
<feature type="helix" evidence="12">
    <location>
        <begin position="211"/>
        <end position="226"/>
    </location>
</feature>
<feature type="helix" evidence="12">
    <location>
        <begin position="229"/>
        <end position="231"/>
    </location>
</feature>
<feature type="helix" evidence="12">
    <location>
        <begin position="235"/>
        <end position="240"/>
    </location>
</feature>
<feature type="strand" evidence="12">
    <location>
        <begin position="243"/>
        <end position="245"/>
    </location>
</feature>
<feature type="strand" evidence="12">
    <location>
        <begin position="254"/>
        <end position="256"/>
    </location>
</feature>
<feature type="helix" evidence="12">
    <location>
        <begin position="258"/>
        <end position="266"/>
    </location>
</feature>
<feature type="helix" evidence="12">
    <location>
        <begin position="270"/>
        <end position="282"/>
    </location>
</feature>
<feature type="helix" evidence="12">
    <location>
        <begin position="287"/>
        <end position="289"/>
    </location>
</feature>
<feature type="turn" evidence="12">
    <location>
        <begin position="296"/>
        <end position="298"/>
    </location>
</feature>
<feature type="helix" evidence="12">
    <location>
        <begin position="299"/>
        <end position="301"/>
    </location>
</feature>
<feature type="helix" evidence="12">
    <location>
        <begin position="304"/>
        <end position="314"/>
    </location>
</feature>
<feature type="helix" evidence="12">
    <location>
        <begin position="317"/>
        <end position="319"/>
    </location>
</feature>
<feature type="strand" evidence="12">
    <location>
        <begin position="320"/>
        <end position="328"/>
    </location>
</feature>
<feature type="helix" evidence="12">
    <location>
        <begin position="330"/>
        <end position="341"/>
    </location>
</feature>
<feature type="helix" evidence="12">
    <location>
        <begin position="349"/>
        <end position="352"/>
    </location>
</feature>
<feature type="strand" evidence="12">
    <location>
        <begin position="365"/>
        <end position="372"/>
    </location>
</feature>
<feature type="strand" evidence="12">
    <location>
        <begin position="375"/>
        <end position="377"/>
    </location>
</feature>
<feature type="helix" evidence="12">
    <location>
        <begin position="379"/>
        <end position="381"/>
    </location>
</feature>
<feature type="strand" evidence="12">
    <location>
        <begin position="383"/>
        <end position="390"/>
    </location>
</feature>
<feature type="helix" evidence="12">
    <location>
        <begin position="398"/>
        <end position="412"/>
    </location>
</feature>
<feature type="helix" evidence="12">
    <location>
        <begin position="418"/>
        <end position="425"/>
    </location>
</feature>
<feature type="strand" evidence="12">
    <location>
        <begin position="430"/>
        <end position="432"/>
    </location>
</feature>
<feature type="strand" evidence="12">
    <location>
        <begin position="436"/>
        <end position="438"/>
    </location>
</feature>
<feature type="strand" evidence="12">
    <location>
        <begin position="440"/>
        <end position="443"/>
    </location>
</feature>
<feature type="strand" evidence="12">
    <location>
        <begin position="445"/>
        <end position="453"/>
    </location>
</feature>
<feature type="helix" evidence="12">
    <location>
        <begin position="455"/>
        <end position="457"/>
    </location>
</feature>
<feature type="helix" evidence="12">
    <location>
        <begin position="458"/>
        <end position="475"/>
    </location>
</feature>
<feature type="helix" evidence="12">
    <location>
        <begin position="479"/>
        <end position="495"/>
    </location>
</feature>
<feature type="helix" evidence="12">
    <location>
        <begin position="503"/>
        <end position="515"/>
    </location>
</feature>
<feature type="turn" evidence="12">
    <location>
        <begin position="516"/>
        <end position="518"/>
    </location>
</feature>
<feature type="helix" evidence="12">
    <location>
        <begin position="523"/>
        <end position="525"/>
    </location>
</feature>
<feature type="helix" evidence="12">
    <location>
        <begin position="528"/>
        <end position="541"/>
    </location>
</feature>
<feature type="helix" evidence="12">
    <location>
        <begin position="543"/>
        <end position="554"/>
    </location>
</feature>
<feature type="turn" evidence="12">
    <location>
        <begin position="555"/>
        <end position="557"/>
    </location>
</feature>
<feature type="strand" evidence="12">
    <location>
        <begin position="561"/>
        <end position="569"/>
    </location>
</feature>
<feature type="helix" evidence="12">
    <location>
        <begin position="572"/>
        <end position="589"/>
    </location>
</feature>
<feature type="helix" evidence="12">
    <location>
        <begin position="593"/>
        <end position="610"/>
    </location>
</feature>
<feature type="helix" evidence="12">
    <location>
        <begin position="616"/>
        <end position="619"/>
    </location>
</feature>
<feature type="helix" evidence="12">
    <location>
        <begin position="627"/>
        <end position="629"/>
    </location>
</feature>
<feature type="strand" evidence="12">
    <location>
        <begin position="640"/>
        <end position="653"/>
    </location>
</feature>
<feature type="strand" evidence="12">
    <location>
        <begin position="657"/>
        <end position="667"/>
    </location>
</feature>
<feature type="turn" evidence="12">
    <location>
        <begin position="673"/>
        <end position="675"/>
    </location>
</feature>
<feature type="helix" evidence="12">
    <location>
        <begin position="676"/>
        <end position="678"/>
    </location>
</feature>
<feature type="helix" evidence="12">
    <location>
        <begin position="679"/>
        <end position="688"/>
    </location>
</feature>
<feature type="strand" evidence="12">
    <location>
        <begin position="692"/>
        <end position="694"/>
    </location>
</feature>
<feature type="helix" evidence="12">
    <location>
        <begin position="696"/>
        <end position="706"/>
    </location>
</feature>
<feature type="strand" evidence="12">
    <location>
        <begin position="707"/>
        <end position="719"/>
    </location>
</feature>
<feature type="strand" evidence="12">
    <location>
        <begin position="722"/>
        <end position="736"/>
    </location>
</feature>
<feature type="helix" evidence="12">
    <location>
        <begin position="737"/>
        <end position="739"/>
    </location>
</feature>
<feature type="helix" evidence="12">
    <location>
        <begin position="740"/>
        <end position="753"/>
    </location>
</feature>
<feature type="helix" evidence="12">
    <location>
        <begin position="759"/>
        <end position="779"/>
    </location>
</feature>
<feature type="helix" evidence="12">
    <location>
        <begin position="781"/>
        <end position="791"/>
    </location>
</feature>
<feature type="helix" evidence="12">
    <location>
        <begin position="795"/>
        <end position="804"/>
    </location>
</feature>
<feature type="helix" evidence="12">
    <location>
        <begin position="806"/>
        <end position="821"/>
    </location>
</feature>
<feature type="helix" evidence="12">
    <location>
        <begin position="823"/>
        <end position="837"/>
    </location>
</feature>
<feature type="strand" evidence="12">
    <location>
        <begin position="844"/>
        <end position="849"/>
    </location>
</feature>
<feature type="helix" evidence="12">
    <location>
        <begin position="851"/>
        <end position="866"/>
    </location>
</feature>
<feature type="strand" evidence="12">
    <location>
        <begin position="888"/>
        <end position="891"/>
    </location>
</feature>
<feature type="strand" evidence="12">
    <location>
        <begin position="895"/>
        <end position="904"/>
    </location>
</feature>
<feature type="helix" evidence="12">
    <location>
        <begin position="905"/>
        <end position="908"/>
    </location>
</feature>
<feature type="helix" evidence="12">
    <location>
        <begin position="915"/>
        <end position="925"/>
    </location>
</feature>
<feature type="helix" evidence="12">
    <location>
        <begin position="927"/>
        <end position="931"/>
    </location>
</feature>
<feature type="turn" evidence="12">
    <location>
        <begin position="932"/>
        <end position="936"/>
    </location>
</feature>
<feature type="strand" evidence="12">
    <location>
        <begin position="939"/>
        <end position="946"/>
    </location>
</feature>
<feature type="turn" evidence="12">
    <location>
        <begin position="947"/>
        <end position="950"/>
    </location>
</feature>
<feature type="strand" evidence="12">
    <location>
        <begin position="951"/>
        <end position="960"/>
    </location>
</feature>
<feature type="helix" evidence="12">
    <location>
        <begin position="963"/>
        <end position="970"/>
    </location>
</feature>
<feature type="helix" evidence="12">
    <location>
        <begin position="972"/>
        <end position="977"/>
    </location>
</feature>
<feature type="helix" evidence="12">
    <location>
        <begin position="983"/>
        <end position="997"/>
    </location>
</feature>
<feature type="helix" evidence="12">
    <location>
        <begin position="1003"/>
        <end position="1015"/>
    </location>
</feature>
<feature type="helix" evidence="12">
    <location>
        <begin position="1020"/>
        <end position="1031"/>
    </location>
</feature>
<feature type="helix" evidence="12">
    <location>
        <begin position="1035"/>
        <end position="1051"/>
    </location>
</feature>
<feature type="strand" evidence="12">
    <location>
        <begin position="1053"/>
        <end position="1058"/>
    </location>
</feature>
<feature type="helix" evidence="12">
    <location>
        <begin position="1060"/>
        <end position="1069"/>
    </location>
</feature>
<feature type="turn" evidence="12">
    <location>
        <begin position="1070"/>
        <end position="1072"/>
    </location>
</feature>
<feature type="strand" evidence="12">
    <location>
        <begin position="1074"/>
        <end position="1077"/>
    </location>
</feature>
<evidence type="ECO:0000255" key="1"/>
<evidence type="ECO:0000269" key="2">
    <source>
    </source>
</evidence>
<evidence type="ECO:0000269" key="3">
    <source>
    </source>
</evidence>
<evidence type="ECO:0000269" key="4">
    <source>
    </source>
</evidence>
<evidence type="ECO:0000269" key="5">
    <source>
    </source>
</evidence>
<evidence type="ECO:0000269" key="6">
    <source>
    </source>
</evidence>
<evidence type="ECO:0000305" key="7"/>
<evidence type="ECO:0000305" key="8">
    <source>
    </source>
</evidence>
<evidence type="ECO:0000305" key="9">
    <source>
    </source>
</evidence>
<evidence type="ECO:0007744" key="10">
    <source>
        <dbReference type="PDB" id="2FGE"/>
    </source>
</evidence>
<evidence type="ECO:0007744" key="11">
    <source>
    </source>
</evidence>
<evidence type="ECO:0007829" key="12">
    <source>
        <dbReference type="PDB" id="2FGE"/>
    </source>
</evidence>
<protein>
    <recommendedName>
        <fullName>Presequence protease 1, chloroplastic/mitochondrial</fullName>
        <shortName>AtPreP1</shortName>
        <shortName>PreP 1</shortName>
        <ecNumber>3.4.24.-</ecNumber>
    </recommendedName>
    <alternativeName>
        <fullName>Zinc metalloprotease 1</fullName>
        <shortName>AtZnMP1</shortName>
    </alternativeName>
</protein>
<dbReference type="EC" id="3.4.24.-"/>
<dbReference type="EMBL" id="AP000419">
    <property type="protein sequence ID" value="BAB02957.1"/>
    <property type="status" value="ALT_INIT"/>
    <property type="molecule type" value="Genomic_DNA"/>
</dbReference>
<dbReference type="EMBL" id="CP002686">
    <property type="protein sequence ID" value="AEE76201.1"/>
    <property type="molecule type" value="Genomic_DNA"/>
</dbReference>
<dbReference type="EMBL" id="AY090240">
    <property type="protein sequence ID" value="AAL90904.1"/>
    <property type="molecule type" value="mRNA"/>
</dbReference>
<dbReference type="EMBL" id="AY091051">
    <property type="protein sequence ID" value="AAM13872.1"/>
    <property type="molecule type" value="mRNA"/>
</dbReference>
<dbReference type="EMBL" id="BT006362">
    <property type="protein sequence ID" value="AAP21170.1"/>
    <property type="molecule type" value="mRNA"/>
</dbReference>
<dbReference type="EMBL" id="BT002372">
    <property type="protein sequence ID" value="AAN86205.1"/>
    <property type="molecule type" value="mRNA"/>
</dbReference>
<dbReference type="RefSeq" id="NP_188548.2">
    <molecule id="Q9LJL3-1"/>
    <property type="nucleotide sequence ID" value="NM_112804.5"/>
</dbReference>
<dbReference type="PDB" id="2FGE">
    <property type="method" value="X-ray"/>
    <property type="resolution" value="2.10 A"/>
    <property type="chains" value="A/B=86-1080"/>
</dbReference>
<dbReference type="PDBsum" id="2FGE"/>
<dbReference type="SMR" id="Q9LJL3"/>
<dbReference type="BioGRID" id="6784">
    <property type="interactions" value="15"/>
</dbReference>
<dbReference type="FunCoup" id="Q9LJL3">
    <property type="interactions" value="4253"/>
</dbReference>
<dbReference type="IntAct" id="Q9LJL3">
    <property type="interactions" value="4"/>
</dbReference>
<dbReference type="MINT" id="Q9LJL3"/>
<dbReference type="STRING" id="3702.Q9LJL3"/>
<dbReference type="MEROPS" id="M16.012"/>
<dbReference type="iPTMnet" id="Q9LJL3"/>
<dbReference type="MetOSite" id="Q9LJL3"/>
<dbReference type="PaxDb" id="3702-AT3G19170.1"/>
<dbReference type="ProteomicsDB" id="236596">
    <molecule id="Q9LJL3-1"/>
</dbReference>
<dbReference type="EnsemblPlants" id="AT3G19170.1">
    <molecule id="Q9LJL3-1"/>
    <property type="protein sequence ID" value="AT3G19170.1"/>
    <property type="gene ID" value="AT3G19170"/>
</dbReference>
<dbReference type="GeneID" id="821451"/>
<dbReference type="Gramene" id="AT3G19170.1">
    <molecule id="Q9LJL3-1"/>
    <property type="protein sequence ID" value="AT3G19170.1"/>
    <property type="gene ID" value="AT3G19170"/>
</dbReference>
<dbReference type="KEGG" id="ath:AT3G19170"/>
<dbReference type="Araport" id="AT3G19170"/>
<dbReference type="TAIR" id="AT3G19170">
    <property type="gene designation" value="PREP1"/>
</dbReference>
<dbReference type="eggNOG" id="KOG2019">
    <property type="taxonomic scope" value="Eukaryota"/>
</dbReference>
<dbReference type="HOGENOM" id="CLU_009165_1_0_1"/>
<dbReference type="InParanoid" id="Q9LJL3"/>
<dbReference type="PhylomeDB" id="Q9LJL3"/>
<dbReference type="EvolutionaryTrace" id="Q9LJL3"/>
<dbReference type="PRO" id="PR:Q9LJL3"/>
<dbReference type="Proteomes" id="UP000006548">
    <property type="component" value="Chromosome 3"/>
</dbReference>
<dbReference type="ExpressionAtlas" id="Q9LJL3">
    <property type="expression patterns" value="baseline and differential"/>
</dbReference>
<dbReference type="GO" id="GO:0048046">
    <property type="term" value="C:apoplast"/>
    <property type="evidence" value="ECO:0007005"/>
    <property type="project" value="TAIR"/>
</dbReference>
<dbReference type="GO" id="GO:0009507">
    <property type="term" value="C:chloroplast"/>
    <property type="evidence" value="ECO:0000314"/>
    <property type="project" value="TAIR"/>
</dbReference>
<dbReference type="GO" id="GO:0009941">
    <property type="term" value="C:chloroplast envelope"/>
    <property type="evidence" value="ECO:0007005"/>
    <property type="project" value="TAIR"/>
</dbReference>
<dbReference type="GO" id="GO:0009570">
    <property type="term" value="C:chloroplast stroma"/>
    <property type="evidence" value="ECO:0007005"/>
    <property type="project" value="TAIR"/>
</dbReference>
<dbReference type="GO" id="GO:0005829">
    <property type="term" value="C:cytosol"/>
    <property type="evidence" value="ECO:0007005"/>
    <property type="project" value="TAIR"/>
</dbReference>
<dbReference type="GO" id="GO:0005759">
    <property type="term" value="C:mitochondrial matrix"/>
    <property type="evidence" value="ECO:0007669"/>
    <property type="project" value="UniProtKB-SubCell"/>
</dbReference>
<dbReference type="GO" id="GO:0005739">
    <property type="term" value="C:mitochondrion"/>
    <property type="evidence" value="ECO:0000314"/>
    <property type="project" value="TAIR"/>
</dbReference>
<dbReference type="GO" id="GO:0046872">
    <property type="term" value="F:metal ion binding"/>
    <property type="evidence" value="ECO:0007669"/>
    <property type="project" value="UniProtKB-KW"/>
</dbReference>
<dbReference type="GO" id="GO:0004222">
    <property type="term" value="F:metalloendopeptidase activity"/>
    <property type="evidence" value="ECO:0000314"/>
    <property type="project" value="TAIR"/>
</dbReference>
<dbReference type="GO" id="GO:0016485">
    <property type="term" value="P:protein processing"/>
    <property type="evidence" value="ECO:0000314"/>
    <property type="project" value="TAIR"/>
</dbReference>
<dbReference type="FunFam" id="3.30.830.10:FF:000037">
    <property type="entry name" value="Presequence protease 1"/>
    <property type="match status" value="1"/>
</dbReference>
<dbReference type="FunFam" id="3.30.830.10:FF:000034">
    <property type="entry name" value="presequence protease 1, chloroplastic/mitochondrial"/>
    <property type="match status" value="1"/>
</dbReference>
<dbReference type="FunFam" id="3.30.830.10:FF:000009">
    <property type="entry name" value="Presequence protease, mitochondrial"/>
    <property type="match status" value="1"/>
</dbReference>
<dbReference type="Gene3D" id="3.30.830.10">
    <property type="entry name" value="Metalloenzyme, LuxS/M16 peptidase-like"/>
    <property type="match status" value="4"/>
</dbReference>
<dbReference type="InterPro" id="IPR011249">
    <property type="entry name" value="Metalloenz_LuxS/M16"/>
</dbReference>
<dbReference type="InterPro" id="IPR011765">
    <property type="entry name" value="Pept_M16_N"/>
</dbReference>
<dbReference type="InterPro" id="IPR007863">
    <property type="entry name" value="Peptidase_M16_C"/>
</dbReference>
<dbReference type="InterPro" id="IPR013578">
    <property type="entry name" value="Peptidase_M16C_assoc"/>
</dbReference>
<dbReference type="InterPro" id="IPR055130">
    <property type="entry name" value="PreP_C"/>
</dbReference>
<dbReference type="PANTHER" id="PTHR43016">
    <property type="entry name" value="PRESEQUENCE PROTEASE"/>
    <property type="match status" value="1"/>
</dbReference>
<dbReference type="PANTHER" id="PTHR43016:SF7">
    <property type="entry name" value="PRESEQUENCE PROTEASE 1, CHLOROPLASTIC_MITOCHONDRIAL"/>
    <property type="match status" value="1"/>
</dbReference>
<dbReference type="Pfam" id="PF08367">
    <property type="entry name" value="M16C_assoc"/>
    <property type="match status" value="1"/>
</dbReference>
<dbReference type="Pfam" id="PF00675">
    <property type="entry name" value="Peptidase_M16"/>
    <property type="match status" value="1"/>
</dbReference>
<dbReference type="Pfam" id="PF05193">
    <property type="entry name" value="Peptidase_M16_C"/>
    <property type="match status" value="1"/>
</dbReference>
<dbReference type="Pfam" id="PF22516">
    <property type="entry name" value="PreP_C"/>
    <property type="match status" value="1"/>
</dbReference>
<dbReference type="SMART" id="SM01264">
    <property type="entry name" value="M16C_associated"/>
    <property type="match status" value="1"/>
</dbReference>
<dbReference type="SUPFAM" id="SSF63411">
    <property type="entry name" value="LuxS/MPP-like metallohydrolase"/>
    <property type="match status" value="4"/>
</dbReference>
<sequence>MLRTVSCLASRSSSSLFFRFFRQFPRSYMSLTSSTAALRVPSRNLRRISSPSVAGRRLLLRRGLRIPSAAVRSVNGQFSRLSVRAVATQPAPLYPDVGQDEAEKLGFEKVSEEFISECKSKAILFKHKKTGCEVMSVSNEDENKVFGVVFRTPPKDSTGIPHILEHSVLCGSRKYPVKEPFVELLKGSLHTFLNAFTYPDRTCYPVASTNTKDFYNLVDVYLDAVFFPKCVDDAHTFQQEGWHYELNDPSEDISYKGVVFNEMKGVYSQPDNILGRIAQQALSPENTYGVDSGGDPKDIPNLTFEEFKEFHRQYYHPSNARIWFYGDDDPVHRLRVLSEYLDMFEASPSPNSSKIKFQKLFSEPVRLVEKYPAGRDGDLKKKHMLCVNWLLSEKPLDLQTQLALGFLDHLMLGTPASPLRKILLESGLGEALVSSGLSDELLQPQFGIGLKGVSEENVQKVEELIMDTLKKLAEEGFDNDAVEASMNTIEFSLRENNTGSFPRGLSLMLQSISKWIYDMDPFEPLKYTEPLKALKTRIAEEGSKAVFSPLIEKLILNNSHRVTIEMQPDPEKATQEEVEEKNILEKVKAAMTEEDLAELARATEELKLKQETPDPPEALRCVPSLNLGDIPKEPTYVPTEVGDINGVKVLRHDLFTNDIIYTEVVFDIGSLKHELLPLVPLFCQSLLEMGTKDLTFVQLNQLIGRKTGGISVYPLTSSVRGKDEPCSKIIVRGKSMAGRADDLFNLMNCLLQEVQFTDQQRFKQFVSQSRARMENRLRGSGHGIAAARMDAMLNIAGWMSEQMGGLSYLEFLHTLEKKVDEDWEGISSSLEEIRRSLLARNGCIVNMTADGKSLTNVEKSVAKFLDLLPENPSGGLVTWDGRLPLRNEAIVIPTQVNYVGKAGNIYSTGYELDGSAYVISKHISNTWLWDRVRVSGGAYGGFCDFDSHSGVFSYLSYRDPNLLKTLDIYDGTGDFLRGLDVDQETLTKAIIGTIGDVDSYQLPDAKGYSSLLRHLLGVTDEERQRKREEILTTSLKDFKDFAQAIDVVRDKGVAVAVASAEDIDAANNERSNFFEVKKAL</sequence>
<name>PREP1_ARATH</name>